<organism>
    <name type="scientific">Mus musculus</name>
    <name type="common">Mouse</name>
    <dbReference type="NCBI Taxonomy" id="10090"/>
    <lineage>
        <taxon>Eukaryota</taxon>
        <taxon>Metazoa</taxon>
        <taxon>Chordata</taxon>
        <taxon>Craniata</taxon>
        <taxon>Vertebrata</taxon>
        <taxon>Euteleostomi</taxon>
        <taxon>Mammalia</taxon>
        <taxon>Eutheria</taxon>
        <taxon>Euarchontoglires</taxon>
        <taxon>Glires</taxon>
        <taxon>Rodentia</taxon>
        <taxon>Myomorpha</taxon>
        <taxon>Muroidea</taxon>
        <taxon>Muridae</taxon>
        <taxon>Murinae</taxon>
        <taxon>Mus</taxon>
        <taxon>Mus</taxon>
    </lineage>
</organism>
<proteinExistence type="evidence at protein level"/>
<comment type="function">
    <text evidence="2 4 5">A cytochrome P450 monooxygenase involved in vitamin D metabolism and in calcium and phosphorus homeostasis. Catalyzes the rate-limiting step in the activation of vitamin D in the kidney, namely the hydroxylation of 25-hydroxyvitamin D3/calcidiol at the C1-alpha position to form the hormonally active form of vitamin D3, 1alpha,25-dihydroxyvitamin D3/calcitriol that acts via the vitamin D receptor (VDR) (PubMed:10092858, PubMed:15972816). Has 1-alpha-hydroxylase activity on vitamin D intermediates of the CYP24A1-mediated inactivation pathway. Converts 24R,25-dihydroxyvitamin D3/secalciferol to 1-alpha,24,25-trihydroxyvitamin D3, an active ligand of VDR. Also active on 25-hydroxyvitamin D2 (By similarity). Mechanistically, uses molecular oxygen inserting one oxygen atom into a substrate, and reducing the second into a water molecule, with two electrons provided by NADPH via FDXR/adrenodoxin reductase and FDX1/adrenodoxin (PubMed:10092858, PubMed:15972816).</text>
</comment>
<comment type="catalytic activity">
    <reaction evidence="4 5">
        <text>calcidiol + 2 reduced [adrenodoxin] + O2 + 2 H(+) = calcitriol + 2 oxidized [adrenodoxin] + H2O</text>
        <dbReference type="Rhea" id="RHEA:20573"/>
        <dbReference type="Rhea" id="RHEA-COMP:9998"/>
        <dbReference type="Rhea" id="RHEA-COMP:9999"/>
        <dbReference type="ChEBI" id="CHEBI:15377"/>
        <dbReference type="ChEBI" id="CHEBI:15378"/>
        <dbReference type="ChEBI" id="CHEBI:15379"/>
        <dbReference type="ChEBI" id="CHEBI:17823"/>
        <dbReference type="ChEBI" id="CHEBI:17933"/>
        <dbReference type="ChEBI" id="CHEBI:33737"/>
        <dbReference type="ChEBI" id="CHEBI:33738"/>
        <dbReference type="EC" id="1.14.15.18"/>
    </reaction>
    <physiologicalReaction direction="left-to-right" evidence="8">
        <dbReference type="Rhea" id="RHEA:20574"/>
    </physiologicalReaction>
</comment>
<comment type="catalytic activity">
    <reaction evidence="4">
        <text>secalciferol + 2 reduced [adrenodoxin] + O2 + 2 H(+) = calcitetrol + 2 oxidized [adrenodoxin] + H2O</text>
        <dbReference type="Rhea" id="RHEA:49064"/>
        <dbReference type="Rhea" id="RHEA-COMP:9998"/>
        <dbReference type="Rhea" id="RHEA-COMP:9999"/>
        <dbReference type="ChEBI" id="CHEBI:15377"/>
        <dbReference type="ChEBI" id="CHEBI:15378"/>
        <dbReference type="ChEBI" id="CHEBI:15379"/>
        <dbReference type="ChEBI" id="CHEBI:28818"/>
        <dbReference type="ChEBI" id="CHEBI:33737"/>
        <dbReference type="ChEBI" id="CHEBI:33738"/>
        <dbReference type="ChEBI" id="CHEBI:47799"/>
        <dbReference type="EC" id="1.14.15.18"/>
    </reaction>
    <physiologicalReaction direction="left-to-right" evidence="7">
        <dbReference type="Rhea" id="RHEA:49065"/>
    </physiologicalReaction>
</comment>
<comment type="catalytic activity">
    <reaction evidence="2">
        <text>25-hydroxy-24-oxocalciol + 2 reduced [adrenodoxin] + O2 + 2 H(+) = (1S)-1,25-dihydroxy-24-oxocalciol + 2 oxidized [adrenodoxin] + H2O</text>
        <dbReference type="Rhea" id="RHEA:49068"/>
        <dbReference type="Rhea" id="RHEA-COMP:9998"/>
        <dbReference type="Rhea" id="RHEA-COMP:9999"/>
        <dbReference type="ChEBI" id="CHEBI:15377"/>
        <dbReference type="ChEBI" id="CHEBI:15378"/>
        <dbReference type="ChEBI" id="CHEBI:15379"/>
        <dbReference type="ChEBI" id="CHEBI:33737"/>
        <dbReference type="ChEBI" id="CHEBI:33738"/>
        <dbReference type="ChEBI" id="CHEBI:47805"/>
        <dbReference type="ChEBI" id="CHEBI:47812"/>
    </reaction>
    <physiologicalReaction direction="left-to-right" evidence="2">
        <dbReference type="Rhea" id="RHEA:49069"/>
    </physiologicalReaction>
</comment>
<comment type="catalytic activity">
    <reaction evidence="2">
        <text>25-hydroxyvitamin D2 + 2 reduced [adrenodoxin] + O2 + 2 H(+) = 1alpha,25-dihydroxyvitamin D2 + 2 oxidized [adrenodoxin] + H2O</text>
        <dbReference type="Rhea" id="RHEA:49048"/>
        <dbReference type="Rhea" id="RHEA-COMP:9998"/>
        <dbReference type="Rhea" id="RHEA-COMP:9999"/>
        <dbReference type="ChEBI" id="CHEBI:15377"/>
        <dbReference type="ChEBI" id="CHEBI:15378"/>
        <dbReference type="ChEBI" id="CHEBI:15379"/>
        <dbReference type="ChEBI" id="CHEBI:33737"/>
        <dbReference type="ChEBI" id="CHEBI:33738"/>
        <dbReference type="ChEBI" id="CHEBI:86319"/>
        <dbReference type="ChEBI" id="CHEBI:86320"/>
    </reaction>
    <physiologicalReaction direction="left-to-right" evidence="2">
        <dbReference type="Rhea" id="RHEA:49049"/>
    </physiologicalReaction>
</comment>
<comment type="cofactor">
    <cofactor evidence="5">
        <name>heme</name>
        <dbReference type="ChEBI" id="CHEBI:30413"/>
    </cofactor>
</comment>
<comment type="activity regulation">
    <text evidence="2">Activated by cardiolipin and dioleoyl phosphatidylethanolamine (DOPE), phospholipids found in the inner mitochondrial membrane. Inhibited by high substrate concentration.</text>
</comment>
<comment type="biophysicochemical properties">
    <kinetics>
        <KM evidence="4">2.7 uM for 25-hydroxyvitamin D3</KM>
        <KM evidence="4">1.3 uM for 24,25-dihydroxyvitamin D3</KM>
        <KM evidence="5">0.28 uM for 25-hydroxyvitamin D3</KM>
        <Vmax evidence="4">9.5 pmol/min/mg enzyme with 25-hydroxyvitamin D3 as substrate</Vmax>
        <Vmax evidence="4">16.7 pmol/min/mg enzyme with 24,25-dihydroxyvitamin D3 as substrate</Vmax>
    </kinetics>
</comment>
<comment type="pathway">
    <text evidence="2">Hormone biosynthesis; vitamin D biosynthesis.</text>
</comment>
<comment type="subcellular location">
    <subcellularLocation>
        <location>Mitochondrion membrane</location>
    </subcellularLocation>
</comment>
<comment type="tissue specificity">
    <text>Kidney.</text>
</comment>
<comment type="similarity">
    <text evidence="6">Belongs to the cytochrome P450 family.</text>
</comment>
<comment type="sequence caution" evidence="6">
    <conflict type="erroneous initiation">
        <sequence resource="EMBL-CDS" id="BAA22434"/>
    </conflict>
</comment>
<evidence type="ECO:0000250" key="1"/>
<evidence type="ECO:0000250" key="2">
    <source>
        <dbReference type="UniProtKB" id="O15528"/>
    </source>
</evidence>
<evidence type="ECO:0000255" key="3"/>
<evidence type="ECO:0000269" key="4">
    <source>
    </source>
</evidence>
<evidence type="ECO:0000269" key="5">
    <source>
    </source>
</evidence>
<evidence type="ECO:0000305" key="6"/>
<evidence type="ECO:0000305" key="7">
    <source>
    </source>
</evidence>
<evidence type="ECO:0000305" key="8">
    <source>
    </source>
</evidence>
<dbReference type="EC" id="1.14.15.18" evidence="4"/>
<dbReference type="EMBL" id="AB006034">
    <property type="protein sequence ID" value="BAA22434.1"/>
    <property type="status" value="ALT_INIT"/>
    <property type="molecule type" value="mRNA"/>
</dbReference>
<dbReference type="EMBL" id="AF235021">
    <property type="protein sequence ID" value="AAK15024.1"/>
    <property type="molecule type" value="Genomic_DNA"/>
</dbReference>
<dbReference type="EMBL" id="AF286219">
    <property type="protein sequence ID" value="AAG44889.1"/>
    <property type="molecule type" value="Genomic_DNA"/>
</dbReference>
<dbReference type="CCDS" id="CCDS24224.2"/>
<dbReference type="RefSeq" id="NP_034139.2">
    <property type="nucleotide sequence ID" value="NM_010009.2"/>
</dbReference>
<dbReference type="SMR" id="O35084"/>
<dbReference type="BioGRID" id="199031">
    <property type="interactions" value="6"/>
</dbReference>
<dbReference type="FunCoup" id="O35084">
    <property type="interactions" value="1059"/>
</dbReference>
<dbReference type="STRING" id="10090.ENSMUSP00000130005"/>
<dbReference type="BindingDB" id="O35084"/>
<dbReference type="ChEMBL" id="CHEMBL3329080"/>
<dbReference type="DrugCentral" id="O35084"/>
<dbReference type="SwissLipids" id="SLP:000001485"/>
<dbReference type="GlyGen" id="O35084">
    <property type="glycosylation" value="1 site"/>
</dbReference>
<dbReference type="iPTMnet" id="O35084"/>
<dbReference type="PhosphoSitePlus" id="O35084"/>
<dbReference type="PaxDb" id="10090-ENSMUSP00000130005"/>
<dbReference type="ProteomicsDB" id="283811"/>
<dbReference type="Antibodypedia" id="55993">
    <property type="antibodies" value="133 antibodies from 24 providers"/>
</dbReference>
<dbReference type="DNASU" id="13115"/>
<dbReference type="Ensembl" id="ENSMUST00000165764.8">
    <property type="protein sequence ID" value="ENSMUSP00000130005.2"/>
    <property type="gene ID" value="ENSMUSG00000006724.13"/>
</dbReference>
<dbReference type="GeneID" id="13115"/>
<dbReference type="KEGG" id="mmu:13115"/>
<dbReference type="UCSC" id="uc007hhs.2">
    <property type="organism name" value="mouse"/>
</dbReference>
<dbReference type="AGR" id="MGI:1098274"/>
<dbReference type="CTD" id="1594"/>
<dbReference type="MGI" id="MGI:1098274">
    <property type="gene designation" value="Cyp27b1"/>
</dbReference>
<dbReference type="VEuPathDB" id="HostDB:ENSMUSG00000006724"/>
<dbReference type="eggNOG" id="KOG0159">
    <property type="taxonomic scope" value="Eukaryota"/>
</dbReference>
<dbReference type="GeneTree" id="ENSGT00950000182905"/>
<dbReference type="HOGENOM" id="CLU_001570_28_3_1"/>
<dbReference type="InParanoid" id="O35084"/>
<dbReference type="OMA" id="AEFYKFG"/>
<dbReference type="OrthoDB" id="3945418at2759"/>
<dbReference type="PhylomeDB" id="O35084"/>
<dbReference type="TreeFam" id="TF105094"/>
<dbReference type="BRENDA" id="1.14.15.18">
    <property type="organism ID" value="3474"/>
</dbReference>
<dbReference type="Reactome" id="R-MMU-196791">
    <property type="pathway name" value="Vitamin D (calciferol) metabolism"/>
</dbReference>
<dbReference type="Reactome" id="R-MMU-211916">
    <property type="pathway name" value="Vitamins"/>
</dbReference>
<dbReference type="SABIO-RK" id="O35084"/>
<dbReference type="UniPathway" id="UPA00954"/>
<dbReference type="BioGRID-ORCS" id="13115">
    <property type="hits" value="1 hit in 80 CRISPR screens"/>
</dbReference>
<dbReference type="PRO" id="PR:O35084"/>
<dbReference type="Proteomes" id="UP000000589">
    <property type="component" value="Chromosome 10"/>
</dbReference>
<dbReference type="RNAct" id="O35084">
    <property type="molecule type" value="protein"/>
</dbReference>
<dbReference type="Bgee" id="ENSMUSG00000006724">
    <property type="expression patterns" value="Expressed in blastoderm cell in morula and 33 other cell types or tissues"/>
</dbReference>
<dbReference type="ExpressionAtlas" id="O35084">
    <property type="expression patterns" value="baseline and differential"/>
</dbReference>
<dbReference type="GO" id="GO:0031966">
    <property type="term" value="C:mitochondrial membrane"/>
    <property type="evidence" value="ECO:0007669"/>
    <property type="project" value="UniProtKB-SubCell"/>
</dbReference>
<dbReference type="GO" id="GO:0005739">
    <property type="term" value="C:mitochondrion"/>
    <property type="evidence" value="ECO:0007005"/>
    <property type="project" value="MGI"/>
</dbReference>
<dbReference type="GO" id="GO:0004498">
    <property type="term" value="F:calcidiol 1-monooxygenase activity"/>
    <property type="evidence" value="ECO:0000314"/>
    <property type="project" value="UniProtKB"/>
</dbReference>
<dbReference type="GO" id="GO:0020037">
    <property type="term" value="F:heme binding"/>
    <property type="evidence" value="ECO:0007669"/>
    <property type="project" value="InterPro"/>
</dbReference>
<dbReference type="GO" id="GO:0005506">
    <property type="term" value="F:iron ion binding"/>
    <property type="evidence" value="ECO:0007669"/>
    <property type="project" value="InterPro"/>
</dbReference>
<dbReference type="GO" id="GO:0062185">
    <property type="term" value="F:secalciferol 1-monooxygenase activity"/>
    <property type="evidence" value="ECO:0007669"/>
    <property type="project" value="Ensembl"/>
</dbReference>
<dbReference type="GO" id="GO:0030282">
    <property type="term" value="P:bone mineralization"/>
    <property type="evidence" value="ECO:0007669"/>
    <property type="project" value="Ensembl"/>
</dbReference>
<dbReference type="GO" id="GO:0036378">
    <property type="term" value="P:calcitriol biosynthetic process from calciol"/>
    <property type="evidence" value="ECO:0000314"/>
    <property type="project" value="UniProtKB"/>
</dbReference>
<dbReference type="GO" id="GO:0055074">
    <property type="term" value="P:calcium ion homeostasis"/>
    <property type="evidence" value="ECO:0007669"/>
    <property type="project" value="Ensembl"/>
</dbReference>
<dbReference type="GO" id="GO:0006816">
    <property type="term" value="P:calcium ion transport"/>
    <property type="evidence" value="ECO:0000315"/>
    <property type="project" value="MGI"/>
</dbReference>
<dbReference type="GO" id="GO:0046697">
    <property type="term" value="P:decidualization"/>
    <property type="evidence" value="ECO:0007669"/>
    <property type="project" value="Ensembl"/>
</dbReference>
<dbReference type="GO" id="GO:0070314">
    <property type="term" value="P:G1 to G0 transition"/>
    <property type="evidence" value="ECO:0007669"/>
    <property type="project" value="Ensembl"/>
</dbReference>
<dbReference type="GO" id="GO:0030308">
    <property type="term" value="P:negative regulation of cell growth"/>
    <property type="evidence" value="ECO:0007669"/>
    <property type="project" value="Ensembl"/>
</dbReference>
<dbReference type="GO" id="GO:0008285">
    <property type="term" value="P:negative regulation of cell population proliferation"/>
    <property type="evidence" value="ECO:0007669"/>
    <property type="project" value="Ensembl"/>
</dbReference>
<dbReference type="GO" id="GO:0045618">
    <property type="term" value="P:positive regulation of keratinocyte differentiation"/>
    <property type="evidence" value="ECO:0007669"/>
    <property type="project" value="Ensembl"/>
</dbReference>
<dbReference type="GO" id="GO:0070564">
    <property type="term" value="P:positive regulation of vitamin D receptor signaling pathway"/>
    <property type="evidence" value="ECO:0007669"/>
    <property type="project" value="Ensembl"/>
</dbReference>
<dbReference type="GO" id="GO:0030500">
    <property type="term" value="P:regulation of bone mineralization"/>
    <property type="evidence" value="ECO:0007669"/>
    <property type="project" value="Ensembl"/>
</dbReference>
<dbReference type="GO" id="GO:0043627">
    <property type="term" value="P:response to estrogen"/>
    <property type="evidence" value="ECO:0007669"/>
    <property type="project" value="Ensembl"/>
</dbReference>
<dbReference type="GO" id="GO:0032496">
    <property type="term" value="P:response to lipopolysaccharide"/>
    <property type="evidence" value="ECO:0007669"/>
    <property type="project" value="Ensembl"/>
</dbReference>
<dbReference type="GO" id="GO:0034341">
    <property type="term" value="P:response to type II interferon"/>
    <property type="evidence" value="ECO:0007669"/>
    <property type="project" value="Ensembl"/>
</dbReference>
<dbReference type="GO" id="GO:0033280">
    <property type="term" value="P:response to vitamin D"/>
    <property type="evidence" value="ECO:0000314"/>
    <property type="project" value="BHF-UCL"/>
</dbReference>
<dbReference type="GO" id="GO:0042369">
    <property type="term" value="P:vitamin D catabolic process"/>
    <property type="evidence" value="ECO:0000314"/>
    <property type="project" value="BHF-UCL"/>
</dbReference>
<dbReference type="CDD" id="cd20648">
    <property type="entry name" value="CYP27B1"/>
    <property type="match status" value="1"/>
</dbReference>
<dbReference type="FunFam" id="1.10.630.10:FF:000006">
    <property type="entry name" value="Cytochrome P450 302a1, mitochondrial"/>
    <property type="match status" value="1"/>
</dbReference>
<dbReference type="Gene3D" id="1.10.630.10">
    <property type="entry name" value="Cytochrome P450"/>
    <property type="match status" value="1"/>
</dbReference>
<dbReference type="InterPro" id="IPR050479">
    <property type="entry name" value="CYP11_CYP27_families"/>
</dbReference>
<dbReference type="InterPro" id="IPR001128">
    <property type="entry name" value="Cyt_P450"/>
</dbReference>
<dbReference type="InterPro" id="IPR017972">
    <property type="entry name" value="Cyt_P450_CS"/>
</dbReference>
<dbReference type="InterPro" id="IPR002401">
    <property type="entry name" value="Cyt_P450_E_grp-I"/>
</dbReference>
<dbReference type="InterPro" id="IPR036396">
    <property type="entry name" value="Cyt_P450_sf"/>
</dbReference>
<dbReference type="PANTHER" id="PTHR24279">
    <property type="entry name" value="CYTOCHROME P450"/>
    <property type="match status" value="1"/>
</dbReference>
<dbReference type="PANTHER" id="PTHR24279:SF121">
    <property type="entry name" value="CYTOCHROME P450 FAMILY 27 SUBFAMILY B MEMBER 1"/>
    <property type="match status" value="1"/>
</dbReference>
<dbReference type="Pfam" id="PF00067">
    <property type="entry name" value="p450"/>
    <property type="match status" value="1"/>
</dbReference>
<dbReference type="PRINTS" id="PR00463">
    <property type="entry name" value="EP450I"/>
</dbReference>
<dbReference type="PRINTS" id="PR00385">
    <property type="entry name" value="P450"/>
</dbReference>
<dbReference type="SUPFAM" id="SSF48264">
    <property type="entry name" value="Cytochrome P450"/>
    <property type="match status" value="1"/>
</dbReference>
<dbReference type="PROSITE" id="PS00086">
    <property type="entry name" value="CYTOCHROME_P450"/>
    <property type="match status" value="1"/>
</dbReference>
<accession>O35084</accession>
<sequence>MTQAVKLASRVFHRIHLPLQLDASLGSRGSESVLRSLSDIPGPSTLSFLAELFCKGGLSRLHELQVHGAARYGPIWSGSFGTLRTVYVADPTLVEQLLRQESHCPERCSFSSWAEHRRRHQRACGLLTADGEEWQRLRSLLAPLLLRPQAAAGYAGTLDNVVRDLVRRLRRQRGRGSGLPGLVLDVAGEFYKFGLESIGAVLLGSRLGCLEAEVPPDTETFIHAVGSVFVSTLLTMAMPNWLHHLIPGPWARLCRDWDQMFAFAQRHVELREGEAAMRNQGKPEEDMPSGHHLTHFLFREKVSVQSIVGNVTELLLAGVDTVSNTLSWTLYELSRHPDVQTALHSEITAGTRGSCAHPHGTALSQLPLLKAVIKEVLRLYPVVPGNSRVPDRDIRVGNYVIPQDTLVSLCHYATSRDPTQFPDPNSFNPARWLGEGPTPHPFASLPFGFGKRSCIGRRLAELELQMALSQILTHFEVLPEPGALPIKPMTRTVLVPERSINLQFVDR</sequence>
<reference key="1">
    <citation type="journal article" date="1997" name="Science">
        <title>25-hydroxyvitamin D3 1alpha-hydroxylase and vitamin D synthesis.</title>
        <authorList>
            <person name="Takeyama K."/>
            <person name="Kitanaka S."/>
            <person name="Sato T."/>
            <person name="Kobori M."/>
            <person name="Yanagisawa J."/>
            <person name="Kato S."/>
        </authorList>
    </citation>
    <scope>NUCLEOTIDE SEQUENCE [MRNA]</scope>
    <source>
        <tissue>Kidney</tissue>
    </source>
</reference>
<reference key="2">
    <citation type="submission" date="2000-02" db="EMBL/GenBank/DDBJ databases">
        <title>Cloning of the mouse 25-hydroxyvitamin D3 1-alpha hydroxylase gene.</title>
        <authorList>
            <person name="Kimmel-Jehan C."/>
            <person name="DeLuca H.F."/>
        </authorList>
    </citation>
    <scope>NUCLEOTIDE SEQUENCE</scope>
    <source>
        <strain>129</strain>
    </source>
</reference>
<reference key="3">
    <citation type="journal article" date="2001" name="J. Bone Miner. Res.">
        <title>25-hydroxyvitamin D 1alpha-hydroxylase: structure of the mouse gene, chromosomal assignment, and developmental expression.</title>
        <authorList>
            <person name="Panda D.K."/>
            <person name="Al-Kawas S."/>
            <person name="Seldin M.F."/>
            <person name="Hendy G.N."/>
            <person name="Goltzman D."/>
        </authorList>
    </citation>
    <scope>NUCLEOTIDE SEQUENCE [GENOMIC DNA]</scope>
    <source>
        <strain>129/SvJ</strain>
    </source>
</reference>
<reference key="4">
    <citation type="journal article" date="1999" name="Eur. J. Biochem.">
        <title>Enzymatic properties of mouse 25-hydroxyvitamin D3 1 alpha-hydroxylase expressed in Escherichia coli.</title>
        <authorList>
            <person name="Sakaki T."/>
            <person name="Sawada N."/>
            <person name="Takeyama K."/>
            <person name="Kato S."/>
            <person name="Inouye K."/>
        </authorList>
    </citation>
    <scope>FUNCTION</scope>
    <scope>CATALYTIC ACTIVITY</scope>
    <scope>BIOPHYSICOCHEMICAL PROPERTIES</scope>
</reference>
<reference key="5">
    <citation type="journal article" date="2005" name="J. Biol. Chem.">
        <title>Identification of the amino acid residue of CYP27B1 responsible for binding of 25-hydroxyvitamin D3 whose mutation causes vitamin D-dependent rickets type 1.</title>
        <authorList>
            <person name="Yamamoto K."/>
            <person name="Uchida E."/>
            <person name="Urushino N."/>
            <person name="Sakaki T."/>
            <person name="Kagawa N."/>
            <person name="Sawada N."/>
            <person name="Kamakura M."/>
            <person name="Kato S."/>
            <person name="Inouye K."/>
            <person name="Yamada S."/>
        </authorList>
    </citation>
    <scope>FUNCTION</scope>
    <scope>CATALYTIC ACTIVITY</scope>
    <scope>BIOPHYSICOCHEMICAL PROPERTIES</scope>
    <scope>MUTAGENESIS OF GLN-65 AND SER-408</scope>
    <scope>COFACTOR</scope>
</reference>
<name>CP27B_MOUSE</name>
<gene>
    <name type="primary">Cyp27b1</name>
    <name type="synonym">Cyp27b</name>
    <name type="synonym">Cyp40</name>
</gene>
<keyword id="KW-0349">Heme</keyword>
<keyword id="KW-0408">Iron</keyword>
<keyword id="KW-0443">Lipid metabolism</keyword>
<keyword id="KW-0472">Membrane</keyword>
<keyword id="KW-0479">Metal-binding</keyword>
<keyword id="KW-0496">Mitochondrion</keyword>
<keyword id="KW-0503">Monooxygenase</keyword>
<keyword id="KW-0560">Oxidoreductase</keyword>
<keyword id="KW-1185">Reference proteome</keyword>
<keyword id="KW-0809">Transit peptide</keyword>
<protein>
    <recommendedName>
        <fullName>25-hydroxyvitamin D-1 alpha hydroxylase, mitochondrial</fullName>
        <ecNumber evidence="4">1.14.15.18</ecNumber>
    </recommendedName>
    <alternativeName>
        <fullName>25-OHD-1 alpha-hydroxylase</fullName>
    </alternativeName>
    <alternativeName>
        <fullName>25-hydroxyvitamin D(3) 1-alpha-hydroxylase</fullName>
        <shortName>VD3 1A hydroxylase</shortName>
    </alternativeName>
    <alternativeName>
        <fullName>Calcidiol 1-monooxygenase</fullName>
    </alternativeName>
    <alternativeName>
        <fullName>Cytochrome P450 subfamily XXVIIB polypeptide 1</fullName>
    </alternativeName>
    <alternativeName>
        <fullName>Cytochrome P450C1 alpha</fullName>
    </alternativeName>
    <alternativeName>
        <fullName>Cytochrome P450VD1-alpha</fullName>
    </alternativeName>
    <alternativeName>
        <fullName>Cytochrome p450 27B1</fullName>
    </alternativeName>
</protein>
<feature type="transit peptide" description="Mitochondrion" evidence="3">
    <location>
        <begin position="1"/>
        <end status="unknown"/>
    </location>
</feature>
<feature type="chain" id="PRO_0000003623" description="25-hydroxyvitamin D-1 alpha hydroxylase, mitochondrial">
    <location>
        <begin status="unknown"/>
        <end position="507"/>
    </location>
</feature>
<feature type="binding site" description="axial binding residue" evidence="1">
    <location>
        <position position="454"/>
    </location>
    <ligand>
        <name>heme</name>
        <dbReference type="ChEBI" id="CHEBI:30413"/>
    </ligand>
    <ligandPart>
        <name>Fe</name>
        <dbReference type="ChEBI" id="CHEBI:18248"/>
    </ligandPart>
</feature>
<feature type="mutagenesis site" description="Impaired 1-alpha hydroxylase activity toward 25-hydroxyvitamin D3. Impaired heme binding." evidence="5">
    <original>Q</original>
    <variation>E</variation>
    <location>
        <position position="65"/>
    </location>
</feature>
<feature type="mutagenesis site" description="Impaired 1-alpha hydroxylase activity toward 25-hydroxyvitamin D3." evidence="5">
    <original>S</original>
    <variation>A</variation>
    <variation>V</variation>
    <variation>I</variation>
    <location>
        <position position="408"/>
    </location>
</feature>